<feature type="chain" id="PRO_1000020529" description="Threonine--tRNA ligase">
    <location>
        <begin position="1"/>
        <end position="647"/>
    </location>
</feature>
<feature type="domain" description="TGS" evidence="2">
    <location>
        <begin position="1"/>
        <end position="61"/>
    </location>
</feature>
<feature type="region of interest" description="Catalytic" evidence="1">
    <location>
        <begin position="240"/>
        <end position="538"/>
    </location>
</feature>
<feature type="binding site" evidence="1">
    <location>
        <position position="334"/>
    </location>
    <ligand>
        <name>Zn(2+)</name>
        <dbReference type="ChEBI" id="CHEBI:29105"/>
    </ligand>
</feature>
<feature type="binding site" evidence="1">
    <location>
        <position position="385"/>
    </location>
    <ligand>
        <name>Zn(2+)</name>
        <dbReference type="ChEBI" id="CHEBI:29105"/>
    </ligand>
</feature>
<feature type="binding site" evidence="1">
    <location>
        <position position="515"/>
    </location>
    <ligand>
        <name>Zn(2+)</name>
        <dbReference type="ChEBI" id="CHEBI:29105"/>
    </ligand>
</feature>
<dbReference type="EC" id="6.1.1.3" evidence="1"/>
<dbReference type="EMBL" id="CP000260">
    <property type="protein sequence ID" value="ABF33493.1"/>
    <property type="molecule type" value="Genomic_DNA"/>
</dbReference>
<dbReference type="SMR" id="Q1JI30"/>
<dbReference type="KEGG" id="sph:MGAS10270_Spy0428"/>
<dbReference type="HOGENOM" id="CLU_008554_0_1_9"/>
<dbReference type="Proteomes" id="UP000002436">
    <property type="component" value="Chromosome"/>
</dbReference>
<dbReference type="GO" id="GO:0005737">
    <property type="term" value="C:cytoplasm"/>
    <property type="evidence" value="ECO:0007669"/>
    <property type="project" value="UniProtKB-SubCell"/>
</dbReference>
<dbReference type="GO" id="GO:0005524">
    <property type="term" value="F:ATP binding"/>
    <property type="evidence" value="ECO:0007669"/>
    <property type="project" value="UniProtKB-UniRule"/>
</dbReference>
<dbReference type="GO" id="GO:0140096">
    <property type="term" value="F:catalytic activity, acting on a protein"/>
    <property type="evidence" value="ECO:0007669"/>
    <property type="project" value="UniProtKB-ARBA"/>
</dbReference>
<dbReference type="GO" id="GO:0046872">
    <property type="term" value="F:metal ion binding"/>
    <property type="evidence" value="ECO:0007669"/>
    <property type="project" value="UniProtKB-KW"/>
</dbReference>
<dbReference type="GO" id="GO:0004829">
    <property type="term" value="F:threonine-tRNA ligase activity"/>
    <property type="evidence" value="ECO:0007669"/>
    <property type="project" value="UniProtKB-UniRule"/>
</dbReference>
<dbReference type="GO" id="GO:0016740">
    <property type="term" value="F:transferase activity"/>
    <property type="evidence" value="ECO:0007669"/>
    <property type="project" value="UniProtKB-ARBA"/>
</dbReference>
<dbReference type="GO" id="GO:0000049">
    <property type="term" value="F:tRNA binding"/>
    <property type="evidence" value="ECO:0007669"/>
    <property type="project" value="UniProtKB-KW"/>
</dbReference>
<dbReference type="GO" id="GO:0006435">
    <property type="term" value="P:threonyl-tRNA aminoacylation"/>
    <property type="evidence" value="ECO:0007669"/>
    <property type="project" value="UniProtKB-UniRule"/>
</dbReference>
<dbReference type="CDD" id="cd01667">
    <property type="entry name" value="TGS_ThrRS"/>
    <property type="match status" value="1"/>
</dbReference>
<dbReference type="CDD" id="cd00860">
    <property type="entry name" value="ThrRS_anticodon"/>
    <property type="match status" value="1"/>
</dbReference>
<dbReference type="CDD" id="cd00771">
    <property type="entry name" value="ThrRS_core"/>
    <property type="match status" value="1"/>
</dbReference>
<dbReference type="FunFam" id="3.10.20.30:FF:000005">
    <property type="entry name" value="Threonine--tRNA ligase"/>
    <property type="match status" value="1"/>
</dbReference>
<dbReference type="FunFam" id="3.30.54.20:FF:000002">
    <property type="entry name" value="Threonine--tRNA ligase"/>
    <property type="match status" value="1"/>
</dbReference>
<dbReference type="FunFam" id="3.30.930.10:FF:000002">
    <property type="entry name" value="Threonine--tRNA ligase"/>
    <property type="match status" value="1"/>
</dbReference>
<dbReference type="FunFam" id="3.40.50.800:FF:000001">
    <property type="entry name" value="Threonine--tRNA ligase"/>
    <property type="match status" value="1"/>
</dbReference>
<dbReference type="FunFam" id="3.30.980.10:FF:000005">
    <property type="entry name" value="Threonyl-tRNA synthetase, mitochondrial"/>
    <property type="match status" value="1"/>
</dbReference>
<dbReference type="Gene3D" id="3.10.20.30">
    <property type="match status" value="1"/>
</dbReference>
<dbReference type="Gene3D" id="3.30.54.20">
    <property type="match status" value="1"/>
</dbReference>
<dbReference type="Gene3D" id="3.40.50.800">
    <property type="entry name" value="Anticodon-binding domain"/>
    <property type="match status" value="1"/>
</dbReference>
<dbReference type="Gene3D" id="3.30.930.10">
    <property type="entry name" value="Bira Bifunctional Protein, Domain 2"/>
    <property type="match status" value="1"/>
</dbReference>
<dbReference type="Gene3D" id="3.30.980.10">
    <property type="entry name" value="Threonyl-trna Synthetase, Chain A, domain 2"/>
    <property type="match status" value="1"/>
</dbReference>
<dbReference type="HAMAP" id="MF_00184">
    <property type="entry name" value="Thr_tRNA_synth"/>
    <property type="match status" value="1"/>
</dbReference>
<dbReference type="InterPro" id="IPR002314">
    <property type="entry name" value="aa-tRNA-synt_IIb"/>
</dbReference>
<dbReference type="InterPro" id="IPR006195">
    <property type="entry name" value="aa-tRNA-synth_II"/>
</dbReference>
<dbReference type="InterPro" id="IPR045864">
    <property type="entry name" value="aa-tRNA-synth_II/BPL/LPL"/>
</dbReference>
<dbReference type="InterPro" id="IPR004154">
    <property type="entry name" value="Anticodon-bd"/>
</dbReference>
<dbReference type="InterPro" id="IPR036621">
    <property type="entry name" value="Anticodon-bd_dom_sf"/>
</dbReference>
<dbReference type="InterPro" id="IPR012675">
    <property type="entry name" value="Beta-grasp_dom_sf"/>
</dbReference>
<dbReference type="InterPro" id="IPR004095">
    <property type="entry name" value="TGS"/>
</dbReference>
<dbReference type="InterPro" id="IPR012676">
    <property type="entry name" value="TGS-like"/>
</dbReference>
<dbReference type="InterPro" id="IPR002320">
    <property type="entry name" value="Thr-tRNA-ligase_IIa"/>
</dbReference>
<dbReference type="InterPro" id="IPR018163">
    <property type="entry name" value="Thr/Ala-tRNA-synth_IIc_edit"/>
</dbReference>
<dbReference type="InterPro" id="IPR047246">
    <property type="entry name" value="ThrRS_anticodon"/>
</dbReference>
<dbReference type="InterPro" id="IPR033728">
    <property type="entry name" value="ThrRS_core"/>
</dbReference>
<dbReference type="InterPro" id="IPR012947">
    <property type="entry name" value="tRNA_SAD"/>
</dbReference>
<dbReference type="NCBIfam" id="TIGR00418">
    <property type="entry name" value="thrS"/>
    <property type="match status" value="1"/>
</dbReference>
<dbReference type="PANTHER" id="PTHR11451:SF56">
    <property type="entry name" value="THREONINE--TRNA LIGASE 1"/>
    <property type="match status" value="1"/>
</dbReference>
<dbReference type="PANTHER" id="PTHR11451">
    <property type="entry name" value="THREONINE-TRNA LIGASE"/>
    <property type="match status" value="1"/>
</dbReference>
<dbReference type="Pfam" id="PF03129">
    <property type="entry name" value="HGTP_anticodon"/>
    <property type="match status" value="1"/>
</dbReference>
<dbReference type="Pfam" id="PF02824">
    <property type="entry name" value="TGS"/>
    <property type="match status" value="1"/>
</dbReference>
<dbReference type="Pfam" id="PF00587">
    <property type="entry name" value="tRNA-synt_2b"/>
    <property type="match status" value="1"/>
</dbReference>
<dbReference type="Pfam" id="PF07973">
    <property type="entry name" value="tRNA_SAD"/>
    <property type="match status" value="1"/>
</dbReference>
<dbReference type="PRINTS" id="PR01047">
    <property type="entry name" value="TRNASYNTHTHR"/>
</dbReference>
<dbReference type="SMART" id="SM00863">
    <property type="entry name" value="tRNA_SAD"/>
    <property type="match status" value="1"/>
</dbReference>
<dbReference type="SUPFAM" id="SSF52954">
    <property type="entry name" value="Class II aaRS ABD-related"/>
    <property type="match status" value="1"/>
</dbReference>
<dbReference type="SUPFAM" id="SSF55681">
    <property type="entry name" value="Class II aaRS and biotin synthetases"/>
    <property type="match status" value="1"/>
</dbReference>
<dbReference type="SUPFAM" id="SSF81271">
    <property type="entry name" value="TGS-like"/>
    <property type="match status" value="1"/>
</dbReference>
<dbReference type="SUPFAM" id="SSF55186">
    <property type="entry name" value="ThrRS/AlaRS common domain"/>
    <property type="match status" value="1"/>
</dbReference>
<dbReference type="PROSITE" id="PS50862">
    <property type="entry name" value="AA_TRNA_LIGASE_II"/>
    <property type="match status" value="1"/>
</dbReference>
<dbReference type="PROSITE" id="PS51880">
    <property type="entry name" value="TGS"/>
    <property type="match status" value="1"/>
</dbReference>
<protein>
    <recommendedName>
        <fullName evidence="1">Threonine--tRNA ligase</fullName>
        <ecNumber evidence="1">6.1.1.3</ecNumber>
    </recommendedName>
    <alternativeName>
        <fullName evidence="1">Threonyl-tRNA synthetase</fullName>
        <shortName evidence="1">ThrRS</shortName>
    </alternativeName>
</protein>
<gene>
    <name evidence="1" type="primary">thrS</name>
    <name type="ordered locus">MGAS10270_Spy0428</name>
</gene>
<reference key="1">
    <citation type="journal article" date="2006" name="Proc. Natl. Acad. Sci. U.S.A.">
        <title>Molecular genetic anatomy of inter- and intraserotype variation in the human bacterial pathogen group A Streptococcus.</title>
        <authorList>
            <person name="Beres S.B."/>
            <person name="Richter E.W."/>
            <person name="Nagiec M.J."/>
            <person name="Sumby P."/>
            <person name="Porcella S.F."/>
            <person name="DeLeo F.R."/>
            <person name="Musser J.M."/>
        </authorList>
    </citation>
    <scope>NUCLEOTIDE SEQUENCE [LARGE SCALE GENOMIC DNA]</scope>
    <source>
        <strain>MGAS10270</strain>
    </source>
</reference>
<sequence>MIKITFPDGAVREFESGVTTFDIAESISKSLAKKALAGKFNDQLIDTTRAIEEDGSIEIVTPDHKDAYEVLRHSAAHLFAQAAKRLFPNLHLGVGPAIAEGFYYDTDNAEGQISNEDLPCIEAEMQKIVTENYPCIREEVTKEEALELFKDDPYKVELINEHAGAGLTVYRQGEFVDLCRGPHVPSTGRIQVFHLLNVAGAYWRGNSDNNMMQRIYGTAWFDKKDLKAYLTRLEEAKERDHRKLGKELDLFMISQEVGQGLPFWLPDGATIRRTLERYITDKELASGYQHVYTPPLASVELYKTSGHWDHYQEDMFPVMDMGDGEEFVLRPMNCPHHIQVYKNHVRSYRELPIRIAELGMMHRYEKSGALSGLQRVREMTLNDGHIFVTPEQIQEEFQRALQLIIDVYADFNLTDYRFRLSYRDPNDTHKYYDNDEMWENAQSMLKAALDEMDVDYFEAEGEAAFYGPKLDIQVKTALGNEETLSTIQLDFLLPERFDLKYIGADGEEHRPVMIHRGVISTMERFTAILIETYKGAFPTWLAPHQVTVIPISNEAHIDYAWEVAKTLRDRGVRADVDDRNEKMQYKIRASQTSKIPYQLIVGDKEMEDKSVNVRRYGSKATHTESVEEFVENILADIARKSRPDAQA</sequence>
<comment type="function">
    <text evidence="1">Catalyzes the attachment of threonine to tRNA(Thr) in a two-step reaction: L-threonine is first activated by ATP to form Thr-AMP and then transferred to the acceptor end of tRNA(Thr). Also edits incorrectly charged L-seryl-tRNA(Thr).</text>
</comment>
<comment type="catalytic activity">
    <reaction evidence="1">
        <text>tRNA(Thr) + L-threonine + ATP = L-threonyl-tRNA(Thr) + AMP + diphosphate + H(+)</text>
        <dbReference type="Rhea" id="RHEA:24624"/>
        <dbReference type="Rhea" id="RHEA-COMP:9670"/>
        <dbReference type="Rhea" id="RHEA-COMP:9704"/>
        <dbReference type="ChEBI" id="CHEBI:15378"/>
        <dbReference type="ChEBI" id="CHEBI:30616"/>
        <dbReference type="ChEBI" id="CHEBI:33019"/>
        <dbReference type="ChEBI" id="CHEBI:57926"/>
        <dbReference type="ChEBI" id="CHEBI:78442"/>
        <dbReference type="ChEBI" id="CHEBI:78534"/>
        <dbReference type="ChEBI" id="CHEBI:456215"/>
        <dbReference type="EC" id="6.1.1.3"/>
    </reaction>
</comment>
<comment type="cofactor">
    <cofactor evidence="1">
        <name>Zn(2+)</name>
        <dbReference type="ChEBI" id="CHEBI:29105"/>
    </cofactor>
    <text evidence="1">Binds 1 zinc ion per subunit.</text>
</comment>
<comment type="subunit">
    <text evidence="1">Homodimer.</text>
</comment>
<comment type="subcellular location">
    <subcellularLocation>
        <location evidence="1">Cytoplasm</location>
    </subcellularLocation>
</comment>
<comment type="similarity">
    <text evidence="1">Belongs to the class-II aminoacyl-tRNA synthetase family.</text>
</comment>
<keyword id="KW-0030">Aminoacyl-tRNA synthetase</keyword>
<keyword id="KW-0067">ATP-binding</keyword>
<keyword id="KW-0963">Cytoplasm</keyword>
<keyword id="KW-0436">Ligase</keyword>
<keyword id="KW-0479">Metal-binding</keyword>
<keyword id="KW-0547">Nucleotide-binding</keyword>
<keyword id="KW-0648">Protein biosynthesis</keyword>
<keyword id="KW-0694">RNA-binding</keyword>
<keyword id="KW-0820">tRNA-binding</keyword>
<keyword id="KW-0862">Zinc</keyword>
<evidence type="ECO:0000255" key="1">
    <source>
        <dbReference type="HAMAP-Rule" id="MF_00184"/>
    </source>
</evidence>
<evidence type="ECO:0000255" key="2">
    <source>
        <dbReference type="PROSITE-ProRule" id="PRU01228"/>
    </source>
</evidence>
<accession>Q1JI30</accession>
<name>SYT_STRPD</name>
<organism>
    <name type="scientific">Streptococcus pyogenes serotype M2 (strain MGAS10270)</name>
    <dbReference type="NCBI Taxonomy" id="370552"/>
    <lineage>
        <taxon>Bacteria</taxon>
        <taxon>Bacillati</taxon>
        <taxon>Bacillota</taxon>
        <taxon>Bacilli</taxon>
        <taxon>Lactobacillales</taxon>
        <taxon>Streptococcaceae</taxon>
        <taxon>Streptococcus</taxon>
    </lineage>
</organism>
<proteinExistence type="inferred from homology"/>